<feature type="chain" id="PRO_1000011497" description="4-hydroxy-3-methylbut-2-en-1-yl diphosphate synthase (flavodoxin)">
    <location>
        <begin position="1"/>
        <end position="371"/>
    </location>
</feature>
<feature type="binding site" evidence="1">
    <location>
        <position position="272"/>
    </location>
    <ligand>
        <name>[4Fe-4S] cluster</name>
        <dbReference type="ChEBI" id="CHEBI:49883"/>
    </ligand>
</feature>
<feature type="binding site" evidence="1">
    <location>
        <position position="275"/>
    </location>
    <ligand>
        <name>[4Fe-4S] cluster</name>
        <dbReference type="ChEBI" id="CHEBI:49883"/>
    </ligand>
</feature>
<feature type="binding site" evidence="1">
    <location>
        <position position="307"/>
    </location>
    <ligand>
        <name>[4Fe-4S] cluster</name>
        <dbReference type="ChEBI" id="CHEBI:49883"/>
    </ligand>
</feature>
<feature type="binding site" evidence="1">
    <location>
        <position position="314"/>
    </location>
    <ligand>
        <name>[4Fe-4S] cluster</name>
        <dbReference type="ChEBI" id="CHEBI:49883"/>
    </ligand>
</feature>
<keyword id="KW-0004">4Fe-4S</keyword>
<keyword id="KW-0408">Iron</keyword>
<keyword id="KW-0411">Iron-sulfur</keyword>
<keyword id="KW-0414">Isoprene biosynthesis</keyword>
<keyword id="KW-0479">Metal-binding</keyword>
<keyword id="KW-0560">Oxidoreductase</keyword>
<reference key="1">
    <citation type="journal article" date="2006" name="Genome Biol.">
        <title>Genomic analysis reveals that Pseudomonas aeruginosa virulence is combinatorial.</title>
        <authorList>
            <person name="Lee D.G."/>
            <person name="Urbach J.M."/>
            <person name="Wu G."/>
            <person name="Liberati N.T."/>
            <person name="Feinbaum R.L."/>
            <person name="Miyata S."/>
            <person name="Diggins L.T."/>
            <person name="He J."/>
            <person name="Saucier M."/>
            <person name="Deziel E."/>
            <person name="Friedman L."/>
            <person name="Li L."/>
            <person name="Grills G."/>
            <person name="Montgomery K."/>
            <person name="Kucherlapati R."/>
            <person name="Rahme L.G."/>
            <person name="Ausubel F.M."/>
        </authorList>
    </citation>
    <scope>NUCLEOTIDE SEQUENCE [LARGE SCALE GENOMIC DNA]</scope>
    <source>
        <strain>UCBPP-PA14</strain>
    </source>
</reference>
<comment type="function">
    <text evidence="1">Converts 2C-methyl-D-erythritol 2,4-cyclodiphosphate (ME-2,4cPP) into 1-hydroxy-2-methyl-2-(E)-butenyl 4-diphosphate.</text>
</comment>
<comment type="catalytic activity">
    <reaction evidence="1">
        <text>(2E)-4-hydroxy-3-methylbut-2-enyl diphosphate + oxidized [flavodoxin] + H2O + 2 H(+) = 2-C-methyl-D-erythritol 2,4-cyclic diphosphate + reduced [flavodoxin]</text>
        <dbReference type="Rhea" id="RHEA:43604"/>
        <dbReference type="Rhea" id="RHEA-COMP:10622"/>
        <dbReference type="Rhea" id="RHEA-COMP:10623"/>
        <dbReference type="ChEBI" id="CHEBI:15377"/>
        <dbReference type="ChEBI" id="CHEBI:15378"/>
        <dbReference type="ChEBI" id="CHEBI:57618"/>
        <dbReference type="ChEBI" id="CHEBI:58210"/>
        <dbReference type="ChEBI" id="CHEBI:58483"/>
        <dbReference type="ChEBI" id="CHEBI:128753"/>
        <dbReference type="EC" id="1.17.7.3"/>
    </reaction>
</comment>
<comment type="cofactor">
    <cofactor evidence="1">
        <name>[4Fe-4S] cluster</name>
        <dbReference type="ChEBI" id="CHEBI:49883"/>
    </cofactor>
    <text evidence="1">Binds 1 [4Fe-4S] cluster.</text>
</comment>
<comment type="pathway">
    <text evidence="1">Isoprenoid biosynthesis; isopentenyl diphosphate biosynthesis via DXP pathway; isopentenyl diphosphate from 1-deoxy-D-xylulose 5-phosphate: step 5/6.</text>
</comment>
<comment type="similarity">
    <text evidence="1">Belongs to the IspG family.</text>
</comment>
<proteinExistence type="inferred from homology"/>
<dbReference type="EC" id="1.17.7.3" evidence="1"/>
<dbReference type="EMBL" id="CP000438">
    <property type="protein sequence ID" value="ABJ13064.1"/>
    <property type="molecule type" value="Genomic_DNA"/>
</dbReference>
<dbReference type="RefSeq" id="WP_003092800.1">
    <property type="nucleotide sequence ID" value="NZ_CP034244.1"/>
</dbReference>
<dbReference type="SMR" id="Q02RV7"/>
<dbReference type="KEGG" id="pau:PA14_14880"/>
<dbReference type="PseudoCAP" id="PA14_14880"/>
<dbReference type="HOGENOM" id="CLU_042258_0_0_6"/>
<dbReference type="UniPathway" id="UPA00056">
    <property type="reaction ID" value="UER00096"/>
</dbReference>
<dbReference type="Proteomes" id="UP000000653">
    <property type="component" value="Chromosome"/>
</dbReference>
<dbReference type="GO" id="GO:0051539">
    <property type="term" value="F:4 iron, 4 sulfur cluster binding"/>
    <property type="evidence" value="ECO:0007669"/>
    <property type="project" value="UniProtKB-UniRule"/>
</dbReference>
<dbReference type="GO" id="GO:0046429">
    <property type="term" value="F:4-hydroxy-3-methylbut-2-en-1-yl diphosphate synthase activity (ferredoxin)"/>
    <property type="evidence" value="ECO:0007669"/>
    <property type="project" value="UniProtKB-UniRule"/>
</dbReference>
<dbReference type="GO" id="GO:0141197">
    <property type="term" value="F:4-hydroxy-3-methylbut-2-enyl-diphosphate synthase activity (flavodoxin)"/>
    <property type="evidence" value="ECO:0007669"/>
    <property type="project" value="UniProtKB-EC"/>
</dbReference>
<dbReference type="GO" id="GO:0005506">
    <property type="term" value="F:iron ion binding"/>
    <property type="evidence" value="ECO:0007669"/>
    <property type="project" value="InterPro"/>
</dbReference>
<dbReference type="GO" id="GO:0019288">
    <property type="term" value="P:isopentenyl diphosphate biosynthetic process, methylerythritol 4-phosphate pathway"/>
    <property type="evidence" value="ECO:0007669"/>
    <property type="project" value="UniProtKB-UniRule"/>
</dbReference>
<dbReference type="GO" id="GO:0016114">
    <property type="term" value="P:terpenoid biosynthetic process"/>
    <property type="evidence" value="ECO:0007669"/>
    <property type="project" value="InterPro"/>
</dbReference>
<dbReference type="FunFam" id="3.20.20.20:FF:000001">
    <property type="entry name" value="4-hydroxy-3-methylbut-2-en-1-yl diphosphate synthase (flavodoxin)"/>
    <property type="match status" value="1"/>
</dbReference>
<dbReference type="Gene3D" id="3.20.20.20">
    <property type="entry name" value="Dihydropteroate synthase-like"/>
    <property type="match status" value="1"/>
</dbReference>
<dbReference type="Gene3D" id="3.30.413.10">
    <property type="entry name" value="Sulfite Reductase Hemoprotein, domain 1"/>
    <property type="match status" value="1"/>
</dbReference>
<dbReference type="HAMAP" id="MF_00159">
    <property type="entry name" value="IspG"/>
    <property type="match status" value="1"/>
</dbReference>
<dbReference type="InterPro" id="IPR011005">
    <property type="entry name" value="Dihydropteroate_synth-like_sf"/>
</dbReference>
<dbReference type="InterPro" id="IPR016425">
    <property type="entry name" value="IspG_bac"/>
</dbReference>
<dbReference type="InterPro" id="IPR004588">
    <property type="entry name" value="IspG_bac-typ"/>
</dbReference>
<dbReference type="InterPro" id="IPR045854">
    <property type="entry name" value="NO2/SO3_Rdtase_4Fe4S_sf"/>
</dbReference>
<dbReference type="NCBIfam" id="TIGR00612">
    <property type="entry name" value="ispG_gcpE"/>
    <property type="match status" value="1"/>
</dbReference>
<dbReference type="NCBIfam" id="NF001540">
    <property type="entry name" value="PRK00366.1"/>
    <property type="match status" value="1"/>
</dbReference>
<dbReference type="PANTHER" id="PTHR30454">
    <property type="entry name" value="4-HYDROXY-3-METHYLBUT-2-EN-1-YL DIPHOSPHATE SYNTHASE"/>
    <property type="match status" value="1"/>
</dbReference>
<dbReference type="PANTHER" id="PTHR30454:SF0">
    <property type="entry name" value="4-HYDROXY-3-METHYLBUT-2-EN-1-YL DIPHOSPHATE SYNTHASE (FERREDOXIN), CHLOROPLASTIC"/>
    <property type="match status" value="1"/>
</dbReference>
<dbReference type="Pfam" id="PF04551">
    <property type="entry name" value="GcpE"/>
    <property type="match status" value="1"/>
</dbReference>
<dbReference type="PIRSF" id="PIRSF004640">
    <property type="entry name" value="IspG"/>
    <property type="match status" value="1"/>
</dbReference>
<dbReference type="SUPFAM" id="SSF51717">
    <property type="entry name" value="Dihydropteroate synthetase-like"/>
    <property type="match status" value="1"/>
</dbReference>
<dbReference type="SUPFAM" id="SSF56014">
    <property type="entry name" value="Nitrite and sulphite reductase 4Fe-4S domain-like"/>
    <property type="match status" value="1"/>
</dbReference>
<accession>Q02RV7</accession>
<protein>
    <recommendedName>
        <fullName evidence="1">4-hydroxy-3-methylbut-2-en-1-yl diphosphate synthase (flavodoxin)</fullName>
        <ecNumber evidence="1">1.17.7.3</ecNumber>
    </recommendedName>
    <alternativeName>
        <fullName evidence="1">1-hydroxy-2-methyl-2-(E)-butenyl 4-diphosphate synthase</fullName>
    </alternativeName>
</protein>
<gene>
    <name evidence="1" type="primary">ispG</name>
    <name type="ordered locus">PA14_14880</name>
</gene>
<evidence type="ECO:0000255" key="1">
    <source>
        <dbReference type="HAMAP-Rule" id="MF_00159"/>
    </source>
</evidence>
<name>ISPG_PSEAB</name>
<organism>
    <name type="scientific">Pseudomonas aeruginosa (strain UCBPP-PA14)</name>
    <dbReference type="NCBI Taxonomy" id="208963"/>
    <lineage>
        <taxon>Bacteria</taxon>
        <taxon>Pseudomonadati</taxon>
        <taxon>Pseudomonadota</taxon>
        <taxon>Gammaproteobacteria</taxon>
        <taxon>Pseudomonadales</taxon>
        <taxon>Pseudomonadaceae</taxon>
        <taxon>Pseudomonas</taxon>
    </lineage>
</organism>
<sequence>MSIHSASPIIRRKSRKIWVGNVPVGGDAPIAVQSMTNTETCDVAATVAQIRRLEDAGADIVRVSVPDMDAAEAFGKIKQQVNVPLVADIHFDYRIALRVAELGVDCLRINPGNIGREDRVKAVVDAARERNIPIRIGVNAGSLEKDLQKKYGEPTPEALLESAMRHVDHLDKLDFQNFKVSVKASDVFMAVAAYRLLARQIEQPLHLGITEAGGLRSGTVKSAVGLGMLLAEGIGDTIRISLAADPVEEIKVGFDILKSLHLRSRGINFIACPSCSRQNFDVVKTMNELEGRLEDLLVPMDVAVIGCVVNGPGEAKEAHVGLTGGTPNLVYIDGKPSQKLTNDNLVDELERLIRQKAAEKAEADASLIARG</sequence>